<dbReference type="EMBL" id="U24169">
    <property type="protein sequence ID" value="AAC50391.1"/>
    <property type="status" value="ALT_FRAME"/>
    <property type="molecule type" value="mRNA"/>
</dbReference>
<dbReference type="EMBL" id="AC005995">
    <property type="protein sequence ID" value="AAS00389.1"/>
    <property type="molecule type" value="Genomic_DNA"/>
</dbReference>
<dbReference type="EMBL" id="CH236963">
    <property type="protein sequence ID" value="EAL23713.1"/>
    <property type="molecule type" value="Genomic_DNA"/>
</dbReference>
<dbReference type="EMBL" id="CH878731">
    <property type="protein sequence ID" value="EAW55053.1"/>
    <property type="molecule type" value="Genomic_DNA"/>
</dbReference>
<dbReference type="EMBL" id="BC002853">
    <property type="protein sequence ID" value="AAH02853.1"/>
    <property type="molecule type" value="mRNA"/>
</dbReference>
<dbReference type="EMBL" id="BC010156">
    <property type="protein sequence ID" value="AAH10156.1"/>
    <property type="molecule type" value="mRNA"/>
</dbReference>
<dbReference type="EMBL" id="BC013630">
    <property type="protein sequence ID" value="AAH13630.1"/>
    <property type="molecule type" value="mRNA"/>
</dbReference>
<dbReference type="EMBL" id="AF116615">
    <property type="protein sequence ID" value="AAF71039.1"/>
    <property type="molecule type" value="mRNA"/>
</dbReference>
<dbReference type="CCDS" id="CCDS5344.1">
    <molecule id="Q13155-1"/>
</dbReference>
<dbReference type="CCDS" id="CCDS87475.1">
    <molecule id="Q13155-2"/>
</dbReference>
<dbReference type="RefSeq" id="NP_001313536.1">
    <molecule id="Q13155-2"/>
    <property type="nucleotide sequence ID" value="NM_001326607.2"/>
</dbReference>
<dbReference type="RefSeq" id="NP_006294.2">
    <molecule id="Q13155-1"/>
    <property type="nucleotide sequence ID" value="NM_006303.3"/>
</dbReference>
<dbReference type="PDB" id="4DPG">
    <property type="method" value="X-ray"/>
    <property type="resolution" value="2.84 A"/>
    <property type="chains" value="I/J/K/L=1-48"/>
</dbReference>
<dbReference type="PDB" id="4YCU">
    <property type="method" value="X-ray"/>
    <property type="resolution" value="2.10 A"/>
    <property type="chains" value="C=1-36"/>
</dbReference>
<dbReference type="PDB" id="4YCW">
    <property type="method" value="X-ray"/>
    <property type="resolution" value="2.90 A"/>
    <property type="chains" value="C/D/G/H=1-36"/>
</dbReference>
<dbReference type="PDB" id="5A1N">
    <property type="method" value="X-ray"/>
    <property type="resolution" value="2.10 A"/>
    <property type="chains" value="B=90-320"/>
</dbReference>
<dbReference type="PDB" id="5A34">
    <property type="method" value="X-ray"/>
    <property type="resolution" value="2.60 A"/>
    <property type="chains" value="B/D/F/H=90-320"/>
</dbReference>
<dbReference type="PDB" id="5A5H">
    <property type="method" value="X-ray"/>
    <property type="resolution" value="2.32 A"/>
    <property type="chains" value="B/D/F/H=90-320"/>
</dbReference>
<dbReference type="PDB" id="5Y6L">
    <property type="method" value="X-ray"/>
    <property type="resolution" value="2.90 A"/>
    <property type="chains" value="D=89-320"/>
</dbReference>
<dbReference type="PDB" id="6ILD">
    <property type="method" value="X-ray"/>
    <property type="resolution" value="1.88 A"/>
    <property type="chains" value="C=1-36"/>
</dbReference>
<dbReference type="PDB" id="6IY6">
    <property type="method" value="X-ray"/>
    <property type="resolution" value="3.60 A"/>
    <property type="chains" value="C/D/I/J=115-320"/>
</dbReference>
<dbReference type="PDB" id="6JPV">
    <property type="method" value="X-ray"/>
    <property type="resolution" value="2.15 A"/>
    <property type="chains" value="A/B=24-32"/>
</dbReference>
<dbReference type="PDB" id="6K39">
    <property type="method" value="X-ray"/>
    <property type="resolution" value="1.40 A"/>
    <property type="chains" value="A/B=25-32"/>
</dbReference>
<dbReference type="PDB" id="8J9S">
    <property type="method" value="X-ray"/>
    <property type="resolution" value="3.01 A"/>
    <property type="chains" value="C=50-90"/>
</dbReference>
<dbReference type="PDB" id="9DPL">
    <property type="method" value="EM"/>
    <property type="resolution" value="2.80 A"/>
    <property type="chains" value="D/E=1-36"/>
</dbReference>
<dbReference type="PDBsum" id="4DPG"/>
<dbReference type="PDBsum" id="4YCU"/>
<dbReference type="PDBsum" id="4YCW"/>
<dbReference type="PDBsum" id="5A1N"/>
<dbReference type="PDBsum" id="5A34"/>
<dbReference type="PDBsum" id="5A5H"/>
<dbReference type="PDBsum" id="5Y6L"/>
<dbReference type="PDBsum" id="6ILD"/>
<dbReference type="PDBsum" id="6IY6"/>
<dbReference type="PDBsum" id="6JPV"/>
<dbReference type="PDBsum" id="6K39"/>
<dbReference type="PDBsum" id="8J9S"/>
<dbReference type="PDBsum" id="9DPL"/>
<dbReference type="EMDB" id="EMD-47106"/>
<dbReference type="SMR" id="Q13155"/>
<dbReference type="BioGRID" id="113684">
    <property type="interactions" value="455"/>
</dbReference>
<dbReference type="ComplexPortal" id="CPX-2469">
    <property type="entry name" value="Multiaminoacyl-tRNA synthetase complex"/>
</dbReference>
<dbReference type="CORUM" id="Q13155"/>
<dbReference type="DIP" id="DIP-34421N"/>
<dbReference type="FunCoup" id="Q13155">
    <property type="interactions" value="619"/>
</dbReference>
<dbReference type="IntAct" id="Q13155">
    <property type="interactions" value="104"/>
</dbReference>
<dbReference type="MINT" id="Q13155"/>
<dbReference type="STRING" id="9606.ENSP00000223029"/>
<dbReference type="BindingDB" id="Q13155"/>
<dbReference type="ChEMBL" id="CHEMBL4523285"/>
<dbReference type="GlyGen" id="Q13155">
    <property type="glycosylation" value="1 site, 1 O-linked glycan (1 site)"/>
</dbReference>
<dbReference type="iPTMnet" id="Q13155"/>
<dbReference type="PhosphoSitePlus" id="Q13155"/>
<dbReference type="SwissPalm" id="Q13155"/>
<dbReference type="BioMuta" id="AIMP2"/>
<dbReference type="jPOST" id="Q13155"/>
<dbReference type="MassIVE" id="Q13155"/>
<dbReference type="PaxDb" id="9606-ENSP00000223029"/>
<dbReference type="PeptideAtlas" id="Q13155"/>
<dbReference type="ProteomicsDB" id="30261"/>
<dbReference type="ProteomicsDB" id="59195"/>
<dbReference type="Pumba" id="Q13155"/>
<dbReference type="ABCD" id="Q13155">
    <property type="antibodies" value="1 sequenced antibody"/>
</dbReference>
<dbReference type="Antibodypedia" id="11563">
    <property type="antibodies" value="206 antibodies from 32 providers"/>
</dbReference>
<dbReference type="DNASU" id="7965"/>
<dbReference type="Ensembl" id="ENST00000223029.8">
    <molecule id="Q13155-1"/>
    <property type="protein sequence ID" value="ENSP00000223029.3"/>
    <property type="gene ID" value="ENSG00000106305.10"/>
</dbReference>
<dbReference type="Ensembl" id="ENST00000395236.2">
    <molecule id="Q13155-2"/>
    <property type="protein sequence ID" value="ENSP00000378658.2"/>
    <property type="gene ID" value="ENSG00000106305.10"/>
</dbReference>
<dbReference type="GeneID" id="7965"/>
<dbReference type="KEGG" id="hsa:7965"/>
<dbReference type="MANE-Select" id="ENST00000223029.8">
    <property type="protein sequence ID" value="ENSP00000223029.3"/>
    <property type="RefSeq nucleotide sequence ID" value="NM_006303.4"/>
    <property type="RefSeq protein sequence ID" value="NP_006294.2"/>
</dbReference>
<dbReference type="UCSC" id="uc003spo.4">
    <molecule id="Q13155-1"/>
    <property type="organism name" value="human"/>
</dbReference>
<dbReference type="AGR" id="HGNC:20609"/>
<dbReference type="CTD" id="7965"/>
<dbReference type="DisGeNET" id="7965"/>
<dbReference type="GeneCards" id="AIMP2"/>
<dbReference type="HGNC" id="HGNC:20609">
    <property type="gene designation" value="AIMP2"/>
</dbReference>
<dbReference type="HPA" id="ENSG00000106305">
    <property type="expression patterns" value="Tissue enhanced (skeletal)"/>
</dbReference>
<dbReference type="MalaCards" id="AIMP2"/>
<dbReference type="MIM" id="600859">
    <property type="type" value="gene"/>
</dbReference>
<dbReference type="MIM" id="618006">
    <property type="type" value="phenotype"/>
</dbReference>
<dbReference type="neXtProt" id="NX_Q13155"/>
<dbReference type="OpenTargets" id="ENSG00000106305"/>
<dbReference type="PharmGKB" id="PA165617609"/>
<dbReference type="VEuPathDB" id="HostDB:ENSG00000106305"/>
<dbReference type="eggNOG" id="ENOG502QUNJ">
    <property type="taxonomic scope" value="Eukaryota"/>
</dbReference>
<dbReference type="GeneTree" id="ENSGT00390000015826"/>
<dbReference type="HOGENOM" id="CLU_076114_0_0_1"/>
<dbReference type="InParanoid" id="Q13155"/>
<dbReference type="OMA" id="LCQHYRV"/>
<dbReference type="OrthoDB" id="2309723at2759"/>
<dbReference type="PAN-GO" id="Q13155">
    <property type="GO annotations" value="2 GO annotations based on evolutionary models"/>
</dbReference>
<dbReference type="PhylomeDB" id="Q13155"/>
<dbReference type="TreeFam" id="TF326322"/>
<dbReference type="PathwayCommons" id="Q13155"/>
<dbReference type="Reactome" id="R-HSA-2408522">
    <property type="pathway name" value="Selenoamino acid metabolism"/>
</dbReference>
<dbReference type="Reactome" id="R-HSA-379716">
    <property type="pathway name" value="Cytosolic tRNA aminoacylation"/>
</dbReference>
<dbReference type="Reactome" id="R-HSA-9856649">
    <property type="pathway name" value="Transcriptional and post-translational regulation of MITF-M expression and activity"/>
</dbReference>
<dbReference type="SignaLink" id="Q13155"/>
<dbReference type="SIGNOR" id="Q13155"/>
<dbReference type="BioGRID-ORCS" id="7965">
    <property type="hits" value="17 hits in 1160 CRISPR screens"/>
</dbReference>
<dbReference type="CD-CODE" id="DEE660B4">
    <property type="entry name" value="Stress granule"/>
</dbReference>
<dbReference type="ChiTaRS" id="AIMP2">
    <property type="organism name" value="human"/>
</dbReference>
<dbReference type="EvolutionaryTrace" id="Q13155"/>
<dbReference type="GeneWiki" id="Multisynthetase_complex_auxiliary_component_p38"/>
<dbReference type="GenomeRNAi" id="7965"/>
<dbReference type="Pharos" id="Q13155">
    <property type="development level" value="Tchem"/>
</dbReference>
<dbReference type="PRO" id="PR:Q13155"/>
<dbReference type="Proteomes" id="UP000005640">
    <property type="component" value="Chromosome 7"/>
</dbReference>
<dbReference type="RNAct" id="Q13155">
    <property type="molecule type" value="protein"/>
</dbReference>
<dbReference type="Bgee" id="ENSG00000106305">
    <property type="expression patterns" value="Expressed in oocyte and 219 other cell types or tissues"/>
</dbReference>
<dbReference type="ExpressionAtlas" id="Q13155">
    <property type="expression patterns" value="baseline and differential"/>
</dbReference>
<dbReference type="GO" id="GO:0017101">
    <property type="term" value="C:aminoacyl-tRNA synthetase multienzyme complex"/>
    <property type="evidence" value="ECO:0000314"/>
    <property type="project" value="UniProtKB"/>
</dbReference>
<dbReference type="GO" id="GO:0005829">
    <property type="term" value="C:cytosol"/>
    <property type="evidence" value="ECO:0000314"/>
    <property type="project" value="UniProtKB"/>
</dbReference>
<dbReference type="GO" id="GO:0016020">
    <property type="term" value="C:membrane"/>
    <property type="evidence" value="ECO:0007005"/>
    <property type="project" value="UniProtKB"/>
</dbReference>
<dbReference type="GO" id="GO:0005634">
    <property type="term" value="C:nucleus"/>
    <property type="evidence" value="ECO:0007669"/>
    <property type="project" value="UniProtKB-SubCell"/>
</dbReference>
<dbReference type="GO" id="GO:0060090">
    <property type="term" value="F:molecular adaptor activity"/>
    <property type="evidence" value="ECO:0007669"/>
    <property type="project" value="Ensembl"/>
</dbReference>
<dbReference type="GO" id="GO:0006915">
    <property type="term" value="P:apoptotic process"/>
    <property type="evidence" value="ECO:0007669"/>
    <property type="project" value="UniProtKB-KW"/>
</dbReference>
<dbReference type="GO" id="GO:0008285">
    <property type="term" value="P:negative regulation of cell population proliferation"/>
    <property type="evidence" value="ECO:0007669"/>
    <property type="project" value="Ensembl"/>
</dbReference>
<dbReference type="GO" id="GO:0043525">
    <property type="term" value="P:positive regulation of neuron apoptotic process"/>
    <property type="evidence" value="ECO:0007669"/>
    <property type="project" value="Ensembl"/>
</dbReference>
<dbReference type="GO" id="GO:0031398">
    <property type="term" value="P:positive regulation of protein ubiquitination"/>
    <property type="evidence" value="ECO:0007669"/>
    <property type="project" value="Ensembl"/>
</dbReference>
<dbReference type="GO" id="GO:0016567">
    <property type="term" value="P:protein ubiquitination"/>
    <property type="evidence" value="ECO:0007669"/>
    <property type="project" value="Ensembl"/>
</dbReference>
<dbReference type="GO" id="GO:0065003">
    <property type="term" value="P:protein-containing complex assembly"/>
    <property type="evidence" value="ECO:0007669"/>
    <property type="project" value="Ensembl"/>
</dbReference>
<dbReference type="GO" id="GO:0006412">
    <property type="term" value="P:translation"/>
    <property type="evidence" value="ECO:0007669"/>
    <property type="project" value="UniProtKB-KW"/>
</dbReference>
<dbReference type="GO" id="GO:0060510">
    <property type="term" value="P:type II pneumocyte differentiation"/>
    <property type="evidence" value="ECO:0007669"/>
    <property type="project" value="Ensembl"/>
</dbReference>
<dbReference type="CDD" id="cd03200">
    <property type="entry name" value="GST_C_AIMP2"/>
    <property type="match status" value="1"/>
</dbReference>
<dbReference type="FunFam" id="1.20.1050.130:FF:000002">
    <property type="entry name" value="aminoacyl tRNA synthase complex-interacting multifunctional protein 2 isoform X2"/>
    <property type="match status" value="1"/>
</dbReference>
<dbReference type="Gene3D" id="1.20.1050.130">
    <property type="match status" value="1"/>
</dbReference>
<dbReference type="InterPro" id="IPR042360">
    <property type="entry name" value="AIMP2"/>
</dbReference>
<dbReference type="InterPro" id="IPR031889">
    <property type="entry name" value="AIMP2_LysRS-bd"/>
</dbReference>
<dbReference type="InterPro" id="IPR041503">
    <property type="entry name" value="AIMP2_thioredoxin"/>
</dbReference>
<dbReference type="InterPro" id="IPR036282">
    <property type="entry name" value="Glutathione-S-Trfase_C_sf"/>
</dbReference>
<dbReference type="InterPro" id="IPR004046">
    <property type="entry name" value="GST_C"/>
</dbReference>
<dbReference type="PANTHER" id="PTHR13438">
    <property type="entry name" value="AMINOACYL TRNA SYNTHASE COMPLEX-INTERACTING MULTIFUNCTIONAL PROTEIN"/>
    <property type="match status" value="1"/>
</dbReference>
<dbReference type="PANTHER" id="PTHR13438:SF2">
    <property type="entry name" value="AMINOACYL TRNA SYNTHASE COMPLEX-INTERACTING MULTIFUNCTIONAL PROTEIN 2"/>
    <property type="match status" value="1"/>
</dbReference>
<dbReference type="Pfam" id="PF16780">
    <property type="entry name" value="AIMP2_LysRS_bd"/>
    <property type="match status" value="1"/>
</dbReference>
<dbReference type="Pfam" id="PF00043">
    <property type="entry name" value="GST_C"/>
    <property type="match status" value="1"/>
</dbReference>
<dbReference type="Pfam" id="PF18569">
    <property type="entry name" value="Thioredoxin_16"/>
    <property type="match status" value="1"/>
</dbReference>
<dbReference type="SUPFAM" id="SSF47616">
    <property type="entry name" value="GST C-terminal domain-like"/>
    <property type="match status" value="1"/>
</dbReference>
<keyword id="KW-0002">3D-structure</keyword>
<keyword id="KW-0025">Alternative splicing</keyword>
<keyword id="KW-0053">Apoptosis</keyword>
<keyword id="KW-0963">Cytoplasm</keyword>
<keyword id="KW-0217">Developmental protein</keyword>
<keyword id="KW-0221">Differentiation</keyword>
<keyword id="KW-0903">Direct protein sequencing</keyword>
<keyword id="KW-0225">Disease variant</keyword>
<keyword id="KW-1026">Leukodystrophy</keyword>
<keyword id="KW-0539">Nucleus</keyword>
<keyword id="KW-0597">Phosphoprotein</keyword>
<keyword id="KW-0648">Protein biosynthesis</keyword>
<keyword id="KW-1267">Proteomics identification</keyword>
<keyword id="KW-1185">Reference proteome</keyword>
<keyword id="KW-0832">Ubl conjugation</keyword>
<accession>Q13155</accession>
<accession>F8W950</accession>
<accession>Q75MR1</accession>
<accession>Q96CZ5</accession>
<accession>Q9P1L2</accession>
<reference key="1">
    <citation type="journal article" date="1995" name="Genomics">
        <title>Analysis of the 5' region of PMS2 reveals heterogeneous transcripts and a novel overlapping gene.</title>
        <authorList>
            <person name="Nicolaides N.C."/>
            <person name="Kinzler K.W."/>
            <person name="Vogelstein B."/>
        </authorList>
    </citation>
    <scope>NUCLEOTIDE SEQUENCE [MRNA] (ISOFORM 1)</scope>
</reference>
<reference key="2">
    <citation type="journal article" date="2003" name="Nature">
        <title>The DNA sequence of human chromosome 7.</title>
        <authorList>
            <person name="Hillier L.W."/>
            <person name="Fulton R.S."/>
            <person name="Fulton L.A."/>
            <person name="Graves T.A."/>
            <person name="Pepin K.H."/>
            <person name="Wagner-McPherson C."/>
            <person name="Layman D."/>
            <person name="Maas J."/>
            <person name="Jaeger S."/>
            <person name="Walker R."/>
            <person name="Wylie K."/>
            <person name="Sekhon M."/>
            <person name="Becker M.C."/>
            <person name="O'Laughlin M.D."/>
            <person name="Schaller M.E."/>
            <person name="Fewell G.A."/>
            <person name="Delehaunty K.D."/>
            <person name="Miner T.L."/>
            <person name="Nash W.E."/>
            <person name="Cordes M."/>
            <person name="Du H."/>
            <person name="Sun H."/>
            <person name="Edwards J."/>
            <person name="Bradshaw-Cordum H."/>
            <person name="Ali J."/>
            <person name="Andrews S."/>
            <person name="Isak A."/>
            <person name="Vanbrunt A."/>
            <person name="Nguyen C."/>
            <person name="Du F."/>
            <person name="Lamar B."/>
            <person name="Courtney L."/>
            <person name="Kalicki J."/>
            <person name="Ozersky P."/>
            <person name="Bielicki L."/>
            <person name="Scott K."/>
            <person name="Holmes A."/>
            <person name="Harkins R."/>
            <person name="Harris A."/>
            <person name="Strong C.M."/>
            <person name="Hou S."/>
            <person name="Tomlinson C."/>
            <person name="Dauphin-Kohlberg S."/>
            <person name="Kozlowicz-Reilly A."/>
            <person name="Leonard S."/>
            <person name="Rohlfing T."/>
            <person name="Rock S.M."/>
            <person name="Tin-Wollam A.-M."/>
            <person name="Abbott A."/>
            <person name="Minx P."/>
            <person name="Maupin R."/>
            <person name="Strowmatt C."/>
            <person name="Latreille P."/>
            <person name="Miller N."/>
            <person name="Johnson D."/>
            <person name="Murray J."/>
            <person name="Woessner J.P."/>
            <person name="Wendl M.C."/>
            <person name="Yang S.-P."/>
            <person name="Schultz B.R."/>
            <person name="Wallis J.W."/>
            <person name="Spieth J."/>
            <person name="Bieri T.A."/>
            <person name="Nelson J.O."/>
            <person name="Berkowicz N."/>
            <person name="Wohldmann P.E."/>
            <person name="Cook L.L."/>
            <person name="Hickenbotham M.T."/>
            <person name="Eldred J."/>
            <person name="Williams D."/>
            <person name="Bedell J.A."/>
            <person name="Mardis E.R."/>
            <person name="Clifton S.W."/>
            <person name="Chissoe S.L."/>
            <person name="Marra M.A."/>
            <person name="Raymond C."/>
            <person name="Haugen E."/>
            <person name="Gillett W."/>
            <person name="Zhou Y."/>
            <person name="James R."/>
            <person name="Phelps K."/>
            <person name="Iadanoto S."/>
            <person name="Bubb K."/>
            <person name="Simms E."/>
            <person name="Levy R."/>
            <person name="Clendenning J."/>
            <person name="Kaul R."/>
            <person name="Kent W.J."/>
            <person name="Furey T.S."/>
            <person name="Baertsch R.A."/>
            <person name="Brent M.R."/>
            <person name="Keibler E."/>
            <person name="Flicek P."/>
            <person name="Bork P."/>
            <person name="Suyama M."/>
            <person name="Bailey J.A."/>
            <person name="Portnoy M.E."/>
            <person name="Torrents D."/>
            <person name="Chinwalla A.T."/>
            <person name="Gish W.R."/>
            <person name="Eddy S.R."/>
            <person name="McPherson J.D."/>
            <person name="Olson M.V."/>
            <person name="Eichler E.E."/>
            <person name="Green E.D."/>
            <person name="Waterston R.H."/>
            <person name="Wilson R.K."/>
        </authorList>
    </citation>
    <scope>NUCLEOTIDE SEQUENCE [LARGE SCALE GENOMIC DNA]</scope>
</reference>
<reference key="3">
    <citation type="journal article" date="2003" name="Science">
        <title>Human chromosome 7: DNA sequence and biology.</title>
        <authorList>
            <person name="Scherer S.W."/>
            <person name="Cheung J."/>
            <person name="MacDonald J.R."/>
            <person name="Osborne L.R."/>
            <person name="Nakabayashi K."/>
            <person name="Herbrick J.-A."/>
            <person name="Carson A.R."/>
            <person name="Parker-Katiraee L."/>
            <person name="Skaug J."/>
            <person name="Khaja R."/>
            <person name="Zhang J."/>
            <person name="Hudek A.K."/>
            <person name="Li M."/>
            <person name="Haddad M."/>
            <person name="Duggan G.E."/>
            <person name="Fernandez B.A."/>
            <person name="Kanematsu E."/>
            <person name="Gentles S."/>
            <person name="Christopoulos C.C."/>
            <person name="Choufani S."/>
            <person name="Kwasnicka D."/>
            <person name="Zheng X.H."/>
            <person name="Lai Z."/>
            <person name="Nusskern D.R."/>
            <person name="Zhang Q."/>
            <person name="Gu Z."/>
            <person name="Lu F."/>
            <person name="Zeesman S."/>
            <person name="Nowaczyk M.J."/>
            <person name="Teshima I."/>
            <person name="Chitayat D."/>
            <person name="Shuman C."/>
            <person name="Weksberg R."/>
            <person name="Zackai E.H."/>
            <person name="Grebe T.A."/>
            <person name="Cox S.R."/>
            <person name="Kirkpatrick S.J."/>
            <person name="Rahman N."/>
            <person name="Friedman J.M."/>
            <person name="Heng H.H.Q."/>
            <person name="Pelicci P.G."/>
            <person name="Lo-Coco F."/>
            <person name="Belloni E."/>
            <person name="Shaffer L.G."/>
            <person name="Pober B."/>
            <person name="Morton C.C."/>
            <person name="Gusella J.F."/>
            <person name="Bruns G.A.P."/>
            <person name="Korf B.R."/>
            <person name="Quade B.J."/>
            <person name="Ligon A.H."/>
            <person name="Ferguson H."/>
            <person name="Higgins A.W."/>
            <person name="Leach N.T."/>
            <person name="Herrick S.R."/>
            <person name="Lemyre E."/>
            <person name="Farra C.G."/>
            <person name="Kim H.-G."/>
            <person name="Summers A.M."/>
            <person name="Gripp K.W."/>
            <person name="Roberts W."/>
            <person name="Szatmari P."/>
            <person name="Winsor E.J.T."/>
            <person name="Grzeschik K.-H."/>
            <person name="Teebi A."/>
            <person name="Minassian B.A."/>
            <person name="Kere J."/>
            <person name="Armengol L."/>
            <person name="Pujana M.A."/>
            <person name="Estivill X."/>
            <person name="Wilson M.D."/>
            <person name="Koop B.F."/>
            <person name="Tosi S."/>
            <person name="Moore G.E."/>
            <person name="Boright A.P."/>
            <person name="Zlotorynski E."/>
            <person name="Kerem B."/>
            <person name="Kroisel P.M."/>
            <person name="Petek E."/>
            <person name="Oscier D.G."/>
            <person name="Mould S.J."/>
            <person name="Doehner H."/>
            <person name="Doehner K."/>
            <person name="Rommens J.M."/>
            <person name="Vincent J.B."/>
            <person name="Venter J.C."/>
            <person name="Li P.W."/>
            <person name="Mural R.J."/>
            <person name="Adams M.D."/>
            <person name="Tsui L.-C."/>
        </authorList>
    </citation>
    <scope>NUCLEOTIDE SEQUENCE [LARGE SCALE GENOMIC DNA]</scope>
</reference>
<reference key="4">
    <citation type="submission" date="2005-07" db="EMBL/GenBank/DDBJ databases">
        <authorList>
            <person name="Mural R.J."/>
            <person name="Istrail S."/>
            <person name="Sutton G.G."/>
            <person name="Florea L."/>
            <person name="Halpern A.L."/>
            <person name="Mobarry C.M."/>
            <person name="Lippert R."/>
            <person name="Walenz B."/>
            <person name="Shatkay H."/>
            <person name="Dew I."/>
            <person name="Miller J.R."/>
            <person name="Flanigan M.J."/>
            <person name="Edwards N.J."/>
            <person name="Bolanos R."/>
            <person name="Fasulo D."/>
            <person name="Halldorsson B.V."/>
            <person name="Hannenhalli S."/>
            <person name="Turner R."/>
            <person name="Yooseph S."/>
            <person name="Lu F."/>
            <person name="Nusskern D.R."/>
            <person name="Shue B.C."/>
            <person name="Zheng X.H."/>
            <person name="Zhong F."/>
            <person name="Delcher A.L."/>
            <person name="Huson D.H."/>
            <person name="Kravitz S.A."/>
            <person name="Mouchard L."/>
            <person name="Reinert K."/>
            <person name="Remington K.A."/>
            <person name="Clark A.G."/>
            <person name="Waterman M.S."/>
            <person name="Eichler E.E."/>
            <person name="Adams M.D."/>
            <person name="Hunkapiller M.W."/>
            <person name="Myers E.W."/>
            <person name="Venter J.C."/>
        </authorList>
    </citation>
    <scope>NUCLEOTIDE SEQUENCE [LARGE SCALE GENOMIC DNA]</scope>
</reference>
<reference key="5">
    <citation type="journal article" date="2004" name="Genome Res.">
        <title>The status, quality, and expansion of the NIH full-length cDNA project: the Mammalian Gene Collection (MGC).</title>
        <authorList>
            <consortium name="The MGC Project Team"/>
        </authorList>
    </citation>
    <scope>NUCLEOTIDE SEQUENCE [LARGE SCALE MRNA] (ISOFORM 1)</scope>
    <scope>VARIANT GLY-129</scope>
    <source>
        <tissue>Lymph</tissue>
        <tissue>Placenta</tissue>
    </source>
</reference>
<reference key="6">
    <citation type="journal article" date="2013" name="PLoS ONE">
        <title>Reinvestigation of aminoacyl-tRNA synthetase core complex by affinity purification-mass spectrometry reveals TARSL2 as a potential member of the complex.</title>
        <authorList>
            <person name="Kim K."/>
            <person name="Park S.J."/>
            <person name="Na S."/>
            <person name="Kim J.S."/>
            <person name="Choi H."/>
            <person name="Kim Y.K."/>
            <person name="Paek E."/>
            <person name="Lee C."/>
        </authorList>
    </citation>
    <scope>PROTEIN SEQUENCE OF 1-17 AND 34-58</scope>
    <scope>ALTERNATIVE SPLICING</scope>
    <scope>IDENTIFICATION IN THE MSC COMPLEX</scope>
    <scope>INTERACTION WITH TARS3</scope>
    <scope>IDENTIFICATION BY MASS SPECTROMETRY (ISOFORMS 1 AND 2)</scope>
</reference>
<reference key="7">
    <citation type="submission" date="1998-12" db="EMBL/GenBank/DDBJ databases">
        <title>Functional prediction of the coding sequences of 121 new genes deduced by analysis of cDNA clones from human fetal liver.</title>
        <authorList>
            <person name="Zhang C."/>
            <person name="Yu Y."/>
            <person name="Zhang S."/>
            <person name="Wei H."/>
            <person name="Zhou G."/>
            <person name="Ouyang S."/>
            <person name="Luo L."/>
            <person name="Bi J."/>
            <person name="Liu M."/>
            <person name="He F."/>
        </authorList>
    </citation>
    <scope>NUCLEOTIDE SEQUENCE [LARGE SCALE MRNA] OF 197-320</scope>
    <source>
        <tissue>Fetal liver</tissue>
    </source>
</reference>
<reference key="8">
    <citation type="journal article" date="1999" name="J. Mol. Biol.">
        <title>Macromolecular assemblage of aminoacyl-tRNA synthetases: identification of protein-protein interactions and characterization of a core protein.</title>
        <authorList>
            <person name="Quevillon S."/>
            <person name="Robinson J.-C."/>
            <person name="Berthonneau E."/>
            <person name="Siatecka M."/>
            <person name="Mirande M."/>
        </authorList>
    </citation>
    <scope>INTERACTION WITH KARS1</scope>
</reference>
<reference key="9">
    <citation type="journal article" date="2003" name="Nat. Genet.">
        <title>Downregulation of FUSE-binding protein and c-myc by tRNA synthetase cofactor p38 is required for lung cell differentiation.</title>
        <authorList>
            <person name="Kim M.J."/>
            <person name="Park B.-J."/>
            <person name="Kang Y.-S."/>
            <person name="Kim H.J."/>
            <person name="Park J.-H."/>
            <person name="Kang J.W."/>
            <person name="Lee S.W."/>
            <person name="Han J.M."/>
            <person name="Lee H.-W."/>
            <person name="Kim S."/>
        </authorList>
    </citation>
    <scope>INTERACTION WITH FUBP1</scope>
</reference>
<reference key="10">
    <citation type="journal article" date="2004" name="J. Virol.">
        <title>Cellular distribution of Lysyl-tRNA synthetase and its interaction with Gag during human immunodeficiency virus type 1 assembly.</title>
        <authorList>
            <person name="Halwani R."/>
            <person name="Cen S."/>
            <person name="Javanbakht H."/>
            <person name="Saadatmand J."/>
            <person name="Kim S."/>
            <person name="Shiba K."/>
            <person name="Kleiman L."/>
        </authorList>
    </citation>
    <scope>INTERACTION WITH KARS1</scope>
</reference>
<reference key="11">
    <citation type="journal article" date="2005" name="J. Neurosci.">
        <title>Accumulation of the authentic parkin substrate aminoacyl-tRNA synthetase cofactor, p38/JTV-1, leads to catecholaminergic cell death.</title>
        <authorList>
            <person name="Ko H.S."/>
            <person name="von Coelln R."/>
            <person name="Sriram S.R."/>
            <person name="Kim S.W."/>
            <person name="Chung K.K.K."/>
            <person name="Pletnikova O."/>
            <person name="Troncoso J."/>
            <person name="Johnson B."/>
            <person name="Saffary R."/>
            <person name="Goh E.L."/>
            <person name="Song H."/>
            <person name="Park B.-J."/>
            <person name="Kim M.J."/>
            <person name="Kim S."/>
            <person name="Dawson V.L."/>
            <person name="Dawson T.M."/>
        </authorList>
    </citation>
    <scope>FUNCTION</scope>
    <scope>INTERACTION WITH PRKN</scope>
    <scope>UBIQUITINATION</scope>
</reference>
<reference key="12">
    <citation type="journal article" date="2008" name="Biochem. Biophys. Res. Commun.">
        <title>Lysyl-tRNA synthetase interacts with EF1alpha, aspartyl-tRNA synthetase and p38 in vitro.</title>
        <authorList>
            <person name="Guzzo C.M."/>
            <person name="Yang D.C.H."/>
        </authorList>
    </citation>
    <scope>INTERACTION WITH KARS1</scope>
</reference>
<reference key="13">
    <citation type="journal article" date="2008" name="Proc. Natl. Acad. Sci. U.S.A.">
        <title>AIMP2/p38, the scaffold for the multi-tRNA synthetase complex, responds to genotoxic stresses via p53.</title>
        <authorList>
            <person name="Han J.M."/>
            <person name="Park B.-J."/>
            <person name="Park S.G."/>
            <person name="Oh Y.S."/>
            <person name="Choi S.J."/>
            <person name="Lee S.W."/>
            <person name="Hwang S.-K."/>
            <person name="Chang S.-H."/>
            <person name="Cho M.-H."/>
            <person name="Kim S."/>
        </authorList>
    </citation>
    <scope>INTERACTION WITH TP53</scope>
    <scope>VARIANTS VAL-92; 97-GLU--THR-99 DELINS ASP-LEU-SER AND SER-209</scope>
    <scope>MUTAGENESIS OF 163-GLU-ASN-164 AND 172-GLN-ASN-173</scope>
</reference>
<reference key="14">
    <citation type="journal article" date="2009" name="J. Biol. Chem.">
        <title>Dissection of the structural organization of the aminoacyl-tRNA synthetase complex.</title>
        <authorList>
            <person name="Kaminska M."/>
            <person name="Havrylenko S."/>
            <person name="Decottignies P."/>
            <person name="Gillet S."/>
            <person name="Le Marechal P."/>
            <person name="Negrutskii B."/>
            <person name="Mirande M."/>
        </authorList>
    </citation>
    <scope>FUNCTION</scope>
    <scope>SUBUNIT</scope>
    <scope>IDENTIFICATION BY MASS SPECTROMETRY</scope>
</reference>
<reference key="15">
    <citation type="journal article" date="2009" name="J. Biol. Chem.">
        <title>Dynamic Organization of Aminoacyl-tRNA Synthetase Complexes in the Cytoplasm of Human Cells.</title>
        <authorList>
            <person name="Kaminska M."/>
            <person name="Havrylenko S."/>
            <person name="Decottignies P."/>
            <person name="Le Marechal P."/>
            <person name="Negrutskii B."/>
            <person name="Mirande M."/>
        </authorList>
    </citation>
    <scope>SUBCELLULAR LOCATION</scope>
    <scope>SUBUNIT</scope>
</reference>
<reference key="16">
    <citation type="journal article" date="2011" name="BMC Syst. Biol.">
        <title>Initial characterization of the human central proteome.</title>
        <authorList>
            <person name="Burkard T.R."/>
            <person name="Planyavsky M."/>
            <person name="Kaupe I."/>
            <person name="Breitwieser F.P."/>
            <person name="Buerckstuemmer T."/>
            <person name="Bennett K.L."/>
            <person name="Superti-Furga G."/>
            <person name="Colinge J."/>
        </authorList>
    </citation>
    <scope>IDENTIFICATION BY MASS SPECTROMETRY [LARGE SCALE ANALYSIS]</scope>
</reference>
<reference key="17">
    <citation type="journal article" date="2014" name="J. Proteomics">
        <title>An enzyme assisted RP-RPLC approach for in-depth analysis of human liver phosphoproteome.</title>
        <authorList>
            <person name="Bian Y."/>
            <person name="Song C."/>
            <person name="Cheng K."/>
            <person name="Dong M."/>
            <person name="Wang F."/>
            <person name="Huang J."/>
            <person name="Sun D."/>
            <person name="Wang L."/>
            <person name="Ye M."/>
            <person name="Zou H."/>
        </authorList>
    </citation>
    <scope>IDENTIFICATION BY MASS SPECTROMETRY [LARGE SCALE ANALYSIS]</scope>
    <source>
        <tissue>Liver</tissue>
    </source>
</reference>
<reference evidence="19" key="18">
    <citation type="journal article" date="2013" name="Mol. Cell">
        <title>Structural switch of lysyl-tRNA synthetase between translation and transcription.</title>
        <authorList>
            <person name="Ofir-Birin Y."/>
            <person name="Fang P."/>
            <person name="Bennett S.P."/>
            <person name="Zhang H.M."/>
            <person name="Wang J."/>
            <person name="Rachmin I."/>
            <person name="Shapiro R."/>
            <person name="Song J."/>
            <person name="Dagan A."/>
            <person name="Pozo J."/>
            <person name="Kim S."/>
            <person name="Marshall A.G."/>
            <person name="Schimmel P."/>
            <person name="Yang X.L."/>
            <person name="Nechushtan H."/>
            <person name="Razin E."/>
            <person name="Guo M."/>
        </authorList>
    </citation>
    <scope>X-RAY CRYSTALLOGRAPHY (2.84 ANGSTROMS) OF 1-48 IN COMPLEX WITH KARS1</scope>
    <scope>SUBUNIT</scope>
</reference>
<reference evidence="20 21" key="19">
    <citation type="journal article" date="2015" name="Chem. Biol.">
        <title>Structural Basis for Specific Inhibition of tRNA Synthetase by an ATP Competitive Inhibitor.</title>
        <authorList>
            <person name="Fang P."/>
            <person name="Han H."/>
            <person name="Wang J."/>
            <person name="Chen K."/>
            <person name="Chen X."/>
            <person name="Guo M."/>
        </authorList>
    </citation>
    <scope>X-RAY CRYSTALLOGRAPHY (2.10 ANGSTROMS) OF 1-36 IN COMPLEX WITH KARS1</scope>
</reference>
<reference evidence="22" key="20">
    <citation type="journal article" date="2015" name="J. Biol. Chem.">
        <title>Assembly of Multi-tRNA Synthetase Complex via Heterotetrameric Glutathione Transferase-homology Domains.</title>
        <authorList>
            <person name="Cho H.Y."/>
            <person name="Maeng S.J."/>
            <person name="Cho H.J."/>
            <person name="Choi Y.S."/>
            <person name="Chung J.M."/>
            <person name="Lee S."/>
            <person name="Kim H.K."/>
            <person name="Kim J.H."/>
            <person name="Eom C.Y."/>
            <person name="Kim Y.G."/>
            <person name="Guo M."/>
            <person name="Jung H.S."/>
            <person name="Kang B.S."/>
            <person name="Kim S."/>
        </authorList>
    </citation>
    <scope>X-RAY CRYSTALLOGRAPHY (2.60 ANGSTROMS) OF 90-320 IN COMPLEX WITH EPRS1</scope>
    <scope>SUBUNIT</scope>
    <scope>MUTAGENESIS OF ARG-215 AND ASP-238</scope>
</reference>
<reference key="21">
    <citation type="journal article" date="2018" name="J. Hum. Genet.">
        <title>Homozygosity for a nonsense variant in AIMP2 is associated with a progressive neurodevelopmental disorder with microcephaly, seizures, and spastic quadriparesis.</title>
        <authorList>
            <person name="Shukla A."/>
            <person name="Das Bhowmik A."/>
            <person name="Hebbar M."/>
            <person name="Rajagopal K.V."/>
            <person name="Girisha K.M."/>
            <person name="Gupta N."/>
            <person name="Dalal A."/>
        </authorList>
    </citation>
    <scope>INVOLVEMENT IN HLD17</scope>
    <scope>VARIANT HLD17 35-TYR--LYS-320 DEL</scope>
</reference>
<protein>
    <recommendedName>
        <fullName>Aminoacyl tRNA synthase complex-interacting multifunctional protein 2</fullName>
    </recommendedName>
    <alternativeName>
        <fullName>Multisynthase complex auxiliary component p38</fullName>
    </alternativeName>
    <alternativeName>
        <fullName>Protein JTV-1</fullName>
    </alternativeName>
</protein>
<evidence type="ECO:0000250" key="1"/>
<evidence type="ECO:0000250" key="2">
    <source>
        <dbReference type="UniProtKB" id="Q8R010"/>
    </source>
</evidence>
<evidence type="ECO:0000269" key="3">
    <source>
    </source>
</evidence>
<evidence type="ECO:0000269" key="4">
    <source>
    </source>
</evidence>
<evidence type="ECO:0000269" key="5">
    <source>
    </source>
</evidence>
<evidence type="ECO:0000269" key="6">
    <source>
    </source>
</evidence>
<evidence type="ECO:0000269" key="7">
    <source>
    </source>
</evidence>
<evidence type="ECO:0000269" key="8">
    <source>
    </source>
</evidence>
<evidence type="ECO:0000269" key="9">
    <source>
    </source>
</evidence>
<evidence type="ECO:0000269" key="10">
    <source>
    </source>
</evidence>
<evidence type="ECO:0000269" key="11">
    <source>
    </source>
</evidence>
<evidence type="ECO:0000269" key="12">
    <source>
    </source>
</evidence>
<evidence type="ECO:0000269" key="13">
    <source>
    </source>
</evidence>
<evidence type="ECO:0000269" key="14">
    <source>
    </source>
</evidence>
<evidence type="ECO:0000269" key="15">
    <source>
    </source>
</evidence>
<evidence type="ECO:0000269" key="16">
    <source>
    </source>
</evidence>
<evidence type="ECO:0000303" key="17">
    <source>
    </source>
</evidence>
<evidence type="ECO:0000305" key="18"/>
<evidence type="ECO:0007744" key="19">
    <source>
        <dbReference type="PDB" id="4DPG"/>
    </source>
</evidence>
<evidence type="ECO:0007744" key="20">
    <source>
        <dbReference type="PDB" id="4YCU"/>
    </source>
</evidence>
<evidence type="ECO:0007744" key="21">
    <source>
        <dbReference type="PDB" id="4YCW"/>
    </source>
</evidence>
<evidence type="ECO:0007744" key="22">
    <source>
        <dbReference type="PDB" id="5A34"/>
    </source>
</evidence>
<evidence type="ECO:0007829" key="23">
    <source>
        <dbReference type="PDB" id="5A1N"/>
    </source>
</evidence>
<evidence type="ECO:0007829" key="24">
    <source>
        <dbReference type="PDB" id="5A34"/>
    </source>
</evidence>
<evidence type="ECO:0007829" key="25">
    <source>
        <dbReference type="PDB" id="5A5H"/>
    </source>
</evidence>
<evidence type="ECO:0007829" key="26">
    <source>
        <dbReference type="PDB" id="5Y6L"/>
    </source>
</evidence>
<evidence type="ECO:0007829" key="27">
    <source>
        <dbReference type="PDB" id="6ILD"/>
    </source>
</evidence>
<evidence type="ECO:0007829" key="28">
    <source>
        <dbReference type="PDB" id="8J9S"/>
    </source>
</evidence>
<sequence>MPMYQVKPYHGGGAPLRVELPTCMYRLPNVHGRSYGPAPGAGHVQEESNLSLQALESRQDDILKRLYELKAAVDGLSKMIQTPDADLDVTNIIQADEPTTLTTNALDLNSVLGKDYGALKDIVINANPASPPLSLLVLHRLLCEHFRVLSTVHTHSSVKSVPENLLKCFGEQNKKQPRQDYQLGFTLIWKNVPKTQMKFSIQTMCPIEGEGNIARFLFSLFGQKHNAVNATLIDSWVDIAIFQLKEGSSKEKAAVFRSMNSALGKSPWLAGNELTVADVVLWSVLQQIGGCSVTVPANVQRWMRSCENLAPFNTALKLLK</sequence>
<name>AIMP2_HUMAN</name>
<proteinExistence type="evidence at protein level"/>
<organism>
    <name type="scientific">Homo sapiens</name>
    <name type="common">Human</name>
    <dbReference type="NCBI Taxonomy" id="9606"/>
    <lineage>
        <taxon>Eukaryota</taxon>
        <taxon>Metazoa</taxon>
        <taxon>Chordata</taxon>
        <taxon>Craniata</taxon>
        <taxon>Vertebrata</taxon>
        <taxon>Euteleostomi</taxon>
        <taxon>Mammalia</taxon>
        <taxon>Eutheria</taxon>
        <taxon>Euarchontoglires</taxon>
        <taxon>Primates</taxon>
        <taxon>Haplorrhini</taxon>
        <taxon>Catarrhini</taxon>
        <taxon>Hominidae</taxon>
        <taxon>Homo</taxon>
    </lineage>
</organism>
<feature type="chain" id="PRO_0000221129" description="Aminoacyl tRNA synthase complex-interacting multifunctional protein 2">
    <location>
        <begin position="1"/>
        <end position="320"/>
    </location>
</feature>
<feature type="domain" description="GST C-terminal">
    <location>
        <begin position="220"/>
        <end position="317"/>
    </location>
</feature>
<feature type="region of interest" description="Interaction with PRKN" evidence="6">
    <location>
        <begin position="82"/>
        <end position="162"/>
    </location>
</feature>
<feature type="region of interest" description="Interaction with TP53" evidence="8">
    <location>
        <begin position="162"/>
        <end position="225"/>
    </location>
</feature>
<feature type="splice variant" id="VSP_059914" description="In isoform 2." evidence="12">
    <location>
        <begin position="46"/>
        <end position="114"/>
    </location>
</feature>
<feature type="sequence variant" id="VAR_081108" description="In HLD17." evidence="15">
    <location>
        <begin position="35"/>
        <end position="320"/>
    </location>
</feature>
<feature type="sequence variant" id="VAR_058392" description="In a lung cancer cell line; reduced interaction with TP53, loss of TP53 activation and loss of proapoptotic activity." evidence="8">
    <original>I</original>
    <variation>V</variation>
    <location>
        <position position="92"/>
    </location>
</feature>
<feature type="sequence variant" id="VAR_058393" description="In a lung cancer cell line; no effect on proapoptotic activity." evidence="8">
    <original>EPT</original>
    <variation>DLS</variation>
    <location>
        <begin position="97"/>
        <end position="99"/>
    </location>
</feature>
<feature type="sequence variant" id="VAR_025521" description="In dbSNP:rs17855441." evidence="5">
    <original>A</original>
    <variation>G</variation>
    <location>
        <position position="129"/>
    </location>
</feature>
<feature type="sequence variant" id="VAR_050125" description="In dbSNP:rs34525431.">
    <original>L</original>
    <variation>I</variation>
    <location>
        <position position="166"/>
    </location>
</feature>
<feature type="sequence variant" id="VAR_058394" description="In a lung cancer cell line; no effect on proapoptotic activity; dbSNP:rs982080297." evidence="8">
    <original>G</original>
    <variation>S</variation>
    <location>
        <position position="209"/>
    </location>
</feature>
<feature type="mutagenesis site" description="Reduced interaction with TP53, loss of TP53 activation and loss of proapoptotic activity." evidence="8">
    <original>EN</original>
    <variation>AA</variation>
    <location>
        <begin position="163"/>
        <end position="164"/>
    </location>
</feature>
<feature type="mutagenesis site" description="Reduced interaction with TP53, loss of TP53 activation and loss of proapoptotic activity." evidence="8">
    <original>QN</original>
    <variation>AA</variation>
    <location>
        <begin position="172"/>
        <end position="173"/>
    </location>
</feature>
<feature type="mutagenesis site" description="Nearly abolishes interaction with EPRS1." evidence="14">
    <original>R</original>
    <variation>A</variation>
    <location>
        <position position="215"/>
    </location>
</feature>
<feature type="mutagenesis site" description="Nearly abolishes interaction with EPRS1." evidence="14">
    <original>D</original>
    <variation>R</variation>
    <location>
        <position position="238"/>
    </location>
</feature>
<feature type="strand" evidence="27">
    <location>
        <begin position="12"/>
        <end position="14"/>
    </location>
</feature>
<feature type="helix" evidence="28">
    <location>
        <begin position="52"/>
        <end position="79"/>
    </location>
</feature>
<feature type="helix" evidence="23">
    <location>
        <begin position="108"/>
        <end position="112"/>
    </location>
</feature>
<feature type="helix" evidence="23">
    <location>
        <begin position="113"/>
        <end position="115"/>
    </location>
</feature>
<feature type="helix" evidence="23">
    <location>
        <begin position="116"/>
        <end position="119"/>
    </location>
</feature>
<feature type="strand" evidence="23">
    <location>
        <begin position="120"/>
        <end position="126"/>
    </location>
</feature>
<feature type="strand" evidence="24">
    <location>
        <begin position="128"/>
        <end position="130"/>
    </location>
</feature>
<feature type="helix" evidence="23">
    <location>
        <begin position="133"/>
        <end position="143"/>
    </location>
</feature>
<feature type="strand" evidence="23">
    <location>
        <begin position="148"/>
        <end position="154"/>
    </location>
</feature>
<feature type="helix" evidence="23">
    <location>
        <begin position="163"/>
        <end position="166"/>
    </location>
</feature>
<feature type="turn" evidence="25">
    <location>
        <begin position="167"/>
        <end position="169"/>
    </location>
</feature>
<feature type="strand" evidence="23">
    <location>
        <begin position="182"/>
        <end position="189"/>
    </location>
</feature>
<feature type="strand" evidence="23">
    <location>
        <begin position="196"/>
        <end position="198"/>
    </location>
</feature>
<feature type="strand" evidence="25">
    <location>
        <begin position="202"/>
        <end position="204"/>
    </location>
</feature>
<feature type="strand" evidence="25">
    <location>
        <begin position="207"/>
        <end position="209"/>
    </location>
</feature>
<feature type="helix" evidence="23">
    <location>
        <begin position="210"/>
        <end position="219"/>
    </location>
</feature>
<feature type="helix" evidence="23">
    <location>
        <begin position="227"/>
        <end position="242"/>
    </location>
</feature>
<feature type="turn" evidence="23">
    <location>
        <begin position="243"/>
        <end position="246"/>
    </location>
</feature>
<feature type="helix" evidence="23">
    <location>
        <begin position="249"/>
        <end position="262"/>
    </location>
</feature>
<feature type="turn" evidence="23">
    <location>
        <begin position="263"/>
        <end position="265"/>
    </location>
</feature>
<feature type="strand" evidence="23">
    <location>
        <begin position="266"/>
        <end position="268"/>
    </location>
</feature>
<feature type="strand" evidence="23">
    <location>
        <begin position="271"/>
        <end position="273"/>
    </location>
</feature>
<feature type="helix" evidence="23">
    <location>
        <begin position="276"/>
        <end position="286"/>
    </location>
</feature>
<feature type="strand" evidence="26">
    <location>
        <begin position="291"/>
        <end position="293"/>
    </location>
</feature>
<feature type="helix" evidence="23">
    <location>
        <begin position="297"/>
        <end position="307"/>
    </location>
</feature>
<feature type="helix" evidence="23">
    <location>
        <begin position="310"/>
        <end position="318"/>
    </location>
</feature>
<gene>
    <name type="primary">AIMP2</name>
    <name type="synonym">JTV1</name>
    <name type="ORF">PRO0992</name>
</gene>
<comment type="function">
    <text evidence="6 9">Required for assembly and stability of the aminoacyl-tRNA synthase complex (PubMed:19131329). Mediates ubiquitination and degradation of FUBP1, a transcriptional activator of MYC, leading to MYC down-regulation which is required for aveolar type II cell differentiation. Blocks MDM2-mediated ubiquitination and degradation of p53/TP53. Functions as a proapoptotic factor.</text>
</comment>
<comment type="subunit">
    <text evidence="3 4 6 7 8 9 10 11 12 13 14 16">Part of the multisynthetase complex (MSC), a multisubunit complex that groups tRNA ligases for Arg (RARS1), Asp (DARS1), Gln (QARS1), Ile (IARS1), Leu (LARS1), Lys (KARS1), Met (MARS1) the bifunctional ligase for Glu and Pro (EPRS1) and the auxiliary subunits AIMP1/p43, AIMP2/p38 and EEF1E1/p18 (PubMed:19131329, PubMed:19289464, PubMed:24312579). Interacts (via N-terminus) with KARS1 (PubMed:15220430, PubMed:18029264, PubMed:23159739, PubMed:26074468, PubMed:9878398). Interacts with EPRS1 (PubMed:26472928). Forms a linear complex that contains MARS1, EEF1E1, EPRS1 and AIMP2 that is at the core of the multisubunit complex (PubMed:26472928). Binds FUBP1 (via C-terminus). Interacts in both its unphosphorylated and phosphorylated forms with p53/TP53 (via N-terminus) in the nucleus following UV irradiation. Interacts (via N-terminus) with PRKN/parkin (via first RING-type domain) (PubMed:16135753). Interacts with TARS3 (PubMed:24312579).</text>
</comment>
<comment type="interaction">
    <interactant intactId="EBI-745226">
        <id>Q13155</id>
    </interactant>
    <interactant intactId="EBI-1045802">
        <id>Q12904</id>
        <label>AIMP1</label>
    </interactant>
    <organismsDiffer>false</organismsDiffer>
    <experiments>5</experiments>
</comment>
<comment type="interaction">
    <interactant intactId="EBI-745226">
        <id>Q13155</id>
    </interactant>
    <interactant intactId="EBI-12412735">
        <id>Q12904-2</id>
        <label>AIMP1</label>
    </interactant>
    <organismsDiffer>false</organismsDiffer>
    <experiments>5</experiments>
</comment>
<comment type="interaction">
    <interactant intactId="EBI-745226">
        <id>Q13155</id>
    </interactant>
    <interactant intactId="EBI-77613">
        <id>P05067</id>
        <label>APP</label>
    </interactant>
    <organismsDiffer>false</organismsDiffer>
    <experiments>3</experiments>
</comment>
<comment type="interaction">
    <interactant intactId="EBI-745226">
        <id>Q13155</id>
    </interactant>
    <interactant intactId="EBI-1050106">
        <id>O75934</id>
        <label>BCAS2</label>
    </interactant>
    <organismsDiffer>false</organismsDiffer>
    <experiments>12</experiments>
</comment>
<comment type="interaction">
    <interactant intactId="EBI-745226">
        <id>Q13155</id>
    </interactant>
    <interactant intactId="EBI-741210">
        <id>Q0VDD7</id>
        <label>BRME1</label>
    </interactant>
    <organismsDiffer>false</organismsDiffer>
    <experiments>8</experiments>
</comment>
<comment type="interaction">
    <interactant intactId="EBI-745226">
        <id>Q13155</id>
    </interactant>
    <interactant intactId="EBI-358049">
        <id>Q13895</id>
        <label>BYSL</label>
    </interactant>
    <organismsDiffer>false</organismsDiffer>
    <experiments>5</experiments>
</comment>
<comment type="interaction">
    <interactant intactId="EBI-745226">
        <id>Q13155</id>
    </interactant>
    <interactant intactId="EBI-747505">
        <id>Q8TAB5</id>
        <label>C1orf216</label>
    </interactant>
    <organismsDiffer>false</organismsDiffer>
    <experiments>3</experiments>
</comment>
<comment type="interaction">
    <interactant intactId="EBI-745226">
        <id>Q13155</id>
    </interactant>
    <interactant intactId="EBI-11524851">
        <id>Q8NA61-2</id>
        <label>CBY2</label>
    </interactant>
    <organismsDiffer>false</organismsDiffer>
    <experiments>5</experiments>
</comment>
<comment type="interaction">
    <interactant intactId="EBI-745226">
        <id>Q13155</id>
    </interactant>
    <interactant intactId="EBI-743488">
        <id>Q96L14</id>
        <label>CEP170P1</label>
    </interactant>
    <organismsDiffer>false</organismsDiffer>
    <experiments>5</experiments>
</comment>
<comment type="interaction">
    <interactant intactId="EBI-745226">
        <id>Q13155</id>
    </interactant>
    <interactant intactId="EBI-358730">
        <id>P14868</id>
        <label>DARS1</label>
    </interactant>
    <organismsDiffer>false</organismsDiffer>
    <experiments>10</experiments>
</comment>
<comment type="interaction">
    <interactant intactId="EBI-745226">
        <id>Q13155</id>
    </interactant>
    <interactant intactId="EBI-11988027">
        <id>Q9NRI5-2</id>
        <label>DISC1</label>
    </interactant>
    <organismsDiffer>false</organismsDiffer>
    <experiments>3</experiments>
</comment>
<comment type="interaction">
    <interactant intactId="EBI-745226">
        <id>Q13155</id>
    </interactant>
    <interactant intactId="EBI-11974185">
        <id>Q494R4-2</id>
        <label>DRC12</label>
    </interactant>
    <organismsDiffer>false</organismsDiffer>
    <experiments>3</experiments>
</comment>
<comment type="interaction">
    <interactant intactId="EBI-745226">
        <id>Q13155</id>
    </interactant>
    <interactant intactId="EBI-742102">
        <id>Q8IYI6</id>
        <label>EXOC8</label>
    </interactant>
    <organismsDiffer>false</organismsDiffer>
    <experiments>5</experiments>
</comment>
<comment type="interaction">
    <interactant intactId="EBI-745226">
        <id>Q13155</id>
    </interactant>
    <interactant intactId="EBI-741101">
        <id>Q13643</id>
        <label>FHL3</label>
    </interactant>
    <organismsDiffer>false</organismsDiffer>
    <experiments>13</experiments>
</comment>
<comment type="interaction">
    <interactant intactId="EBI-745226">
        <id>Q13155</id>
    </interactant>
    <interactant intactId="EBI-711404">
        <id>Q96AE4</id>
        <label>FUBP1</label>
    </interactant>
    <organismsDiffer>false</organismsDiffer>
    <experiments>4</experiments>
</comment>
<comment type="interaction">
    <interactant intactId="EBI-745226">
        <id>Q13155</id>
    </interactant>
    <interactant intactId="EBI-740553">
        <id>P13807</id>
        <label>GYS1</label>
    </interactant>
    <organismsDiffer>false</organismsDiffer>
    <experiments>3</experiments>
</comment>
<comment type="interaction">
    <interactant intactId="EBI-745226">
        <id>Q13155</id>
    </interactant>
    <interactant intactId="EBI-356367">
        <id>Q15046</id>
        <label>KARS1</label>
    </interactant>
    <organismsDiffer>false</organismsDiffer>
    <experiments>23</experiments>
</comment>
<comment type="interaction">
    <interactant intactId="EBI-745226">
        <id>Q13155</id>
    </interactant>
    <interactant intactId="EBI-21457670">
        <id>Q15046-1</id>
        <label>KARS1</label>
    </interactant>
    <organismsDiffer>false</organismsDiffer>
    <experiments>2</experiments>
</comment>
<comment type="interaction">
    <interactant intactId="EBI-745226">
        <id>Q13155</id>
    </interactant>
    <interactant intactId="EBI-948001">
        <id>Q15323</id>
        <label>KRT31</label>
    </interactant>
    <organismsDiffer>false</organismsDiffer>
    <experiments>3</experiments>
</comment>
<comment type="interaction">
    <interactant intactId="EBI-745226">
        <id>Q13155</id>
    </interactant>
    <interactant intactId="EBI-1049638">
        <id>Q14525</id>
        <label>KRT33B</label>
    </interactant>
    <organismsDiffer>false</organismsDiffer>
    <experiments>3</experiments>
</comment>
<comment type="interaction">
    <interactant intactId="EBI-745226">
        <id>Q13155</id>
    </interactant>
    <interactant intactId="EBI-1047093">
        <id>O76011</id>
        <label>KRT34</label>
    </interactant>
    <organismsDiffer>false</organismsDiffer>
    <experiments>3</experiments>
</comment>
<comment type="interaction">
    <interactant intactId="EBI-745226">
        <id>Q13155</id>
    </interactant>
    <interactant intactId="EBI-11958506">
        <id>O76013-2</id>
        <label>KRT36</label>
    </interactant>
    <organismsDiffer>false</organismsDiffer>
    <experiments>3</experiments>
</comment>
<comment type="interaction">
    <interactant intactId="EBI-745226">
        <id>Q13155</id>
    </interactant>
    <interactant intactId="EBI-739696">
        <id>P25791</id>
        <label>LMO2</label>
    </interactant>
    <organismsDiffer>false</organismsDiffer>
    <experiments>3</experiments>
</comment>
<comment type="interaction">
    <interactant intactId="EBI-745226">
        <id>Q13155</id>
    </interactant>
    <interactant intactId="EBI-11959475">
        <id>P25791-3</id>
        <label>LMO2</label>
    </interactant>
    <organismsDiffer>false</organismsDiffer>
    <experiments>6</experiments>
</comment>
<comment type="interaction">
    <interactant intactId="EBI-745226">
        <id>Q13155</id>
    </interactant>
    <interactant intactId="EBI-739832">
        <id>Q8TBB1</id>
        <label>LNX1</label>
    </interactant>
    <organismsDiffer>false</organismsDiffer>
    <experiments>8</experiments>
</comment>
<comment type="interaction">
    <interactant intactId="EBI-745226">
        <id>Q13155</id>
    </interactant>
    <interactant intactId="EBI-1104552">
        <id>Q9NYP9</id>
        <label>MIS18A</label>
    </interactant>
    <organismsDiffer>false</organismsDiffer>
    <experiments>6</experiments>
</comment>
<comment type="interaction">
    <interactant intactId="EBI-745226">
        <id>Q13155</id>
    </interactant>
    <interactant intactId="EBI-928842">
        <id>Q9GZM8</id>
        <label>NDEL1</label>
    </interactant>
    <organismsDiffer>false</organismsDiffer>
    <experiments>3</experiments>
</comment>
<comment type="interaction">
    <interactant intactId="EBI-745226">
        <id>Q13155</id>
    </interactant>
    <interactant intactId="EBI-10172876">
        <id>Q7Z6G3-2</id>
        <label>NECAB2</label>
    </interactant>
    <organismsDiffer>false</organismsDiffer>
    <experiments>3</experiments>
</comment>
<comment type="interaction">
    <interactant intactId="EBI-745226">
        <id>Q13155</id>
    </interactant>
    <interactant intactId="EBI-741158">
        <id>Q96HA8</id>
        <label>NTAQ1</label>
    </interactant>
    <organismsDiffer>false</organismsDiffer>
    <experiments>3</experiments>
</comment>
<comment type="interaction">
    <interactant intactId="EBI-745226">
        <id>Q13155</id>
    </interactant>
    <interactant intactId="EBI-353343">
        <id>P22061</id>
        <label>PCMT1</label>
    </interactant>
    <organismsDiffer>false</organismsDiffer>
    <experiments>3</experiments>
</comment>
<comment type="interaction">
    <interactant intactId="EBI-745226">
        <id>Q13155</id>
    </interactant>
    <interactant intactId="EBI-356973">
        <id>O15212</id>
        <label>PFDN6</label>
    </interactant>
    <organismsDiffer>false</organismsDiffer>
    <experiments>3</experiments>
</comment>
<comment type="interaction">
    <interactant intactId="EBI-745226">
        <id>Q13155</id>
    </interactant>
    <interactant intactId="EBI-742388">
        <id>Q9H8W4</id>
        <label>PLEKHF2</label>
    </interactant>
    <organismsDiffer>false</organismsDiffer>
    <experiments>3</experiments>
</comment>
<comment type="interaction">
    <interactant intactId="EBI-745226">
        <id>Q13155</id>
    </interactant>
    <interactant intactId="EBI-1383852">
        <id>P54646</id>
        <label>PRKAA2</label>
    </interactant>
    <organismsDiffer>false</organismsDiffer>
    <experiments>3</experiments>
</comment>
<comment type="interaction">
    <interactant intactId="EBI-745226">
        <id>Q13155</id>
    </interactant>
    <interactant intactId="EBI-447043">
        <id>Q15276</id>
        <label>RABEP1</label>
    </interactant>
    <organismsDiffer>false</organismsDiffer>
    <experiments>3</experiments>
</comment>
<comment type="interaction">
    <interactant intactId="EBI-745226">
        <id>Q13155</id>
    </interactant>
    <interactant intactId="EBI-17181801">
        <id>P0C264</id>
        <label>SBK3</label>
    </interactant>
    <organismsDiffer>false</organismsDiffer>
    <experiments>3</experiments>
</comment>
<comment type="interaction">
    <interactant intactId="EBI-745226">
        <id>Q13155</id>
    </interactant>
    <interactant intactId="EBI-750559">
        <id>O95391</id>
        <label>SLU7</label>
    </interactant>
    <organismsDiffer>false</organismsDiffer>
    <experiments>3</experiments>
</comment>
<comment type="interaction">
    <interactant intactId="EBI-745226">
        <id>Q13155</id>
    </interactant>
    <interactant intactId="EBI-11334239">
        <id>Q8TC71</id>
        <label>SPATA18</label>
    </interactant>
    <organismsDiffer>false</organismsDiffer>
    <experiments>3</experiments>
</comment>
<comment type="interaction">
    <interactant intactId="EBI-745226">
        <id>Q13155</id>
    </interactant>
    <interactant intactId="EBI-17721485">
        <id>Q8WWU5-7</id>
        <label>TCP11</label>
    </interactant>
    <organismsDiffer>false</organismsDiffer>
    <experiments>3</experiments>
</comment>
<comment type="interaction">
    <interactant intactId="EBI-745226">
        <id>Q13155</id>
    </interactant>
    <interactant intactId="EBI-750109">
        <id>Q9NYB0</id>
        <label>TERF2IP</label>
    </interactant>
    <organismsDiffer>false</organismsDiffer>
    <experiments>2</experiments>
</comment>
<comment type="interaction">
    <interactant intactId="EBI-745226">
        <id>Q13155</id>
    </interactant>
    <interactant intactId="EBI-12090309">
        <id>Q9BXU0</id>
        <label>TEX12</label>
    </interactant>
    <organismsDiffer>false</organismsDiffer>
    <experiments>3</experiments>
</comment>
<comment type="interaction">
    <interactant intactId="EBI-745226">
        <id>Q13155</id>
    </interactant>
    <interactant intactId="EBI-1105213">
        <id>Q9UBB9</id>
        <label>TFIP11</label>
    </interactant>
    <organismsDiffer>false</organismsDiffer>
    <experiments>6</experiments>
</comment>
<comment type="interaction">
    <interactant intactId="EBI-745226">
        <id>Q13155</id>
    </interactant>
    <interactant intactId="EBI-366083">
        <id>P04637</id>
        <label>TP53</label>
    </interactant>
    <organismsDiffer>false</organismsDiffer>
    <experiments>6</experiments>
</comment>
<comment type="interaction">
    <interactant intactId="EBI-745226">
        <id>Q13155</id>
    </interactant>
    <interactant intactId="EBI-16428984">
        <id>A0A0S2Z6H0</id>
        <label>ZGPAT</label>
    </interactant>
    <organismsDiffer>false</organismsDiffer>
    <experiments>3</experiments>
</comment>
<comment type="interaction">
    <interactant intactId="EBI-745226">
        <id>Q13155</id>
    </interactant>
    <interactant intactId="EBI-3439227">
        <id>Q8N5A5</id>
        <label>ZGPAT</label>
    </interactant>
    <organismsDiffer>false</organismsDiffer>
    <experiments>3</experiments>
</comment>
<comment type="interaction">
    <interactant intactId="EBI-745226">
        <id>Q13155</id>
    </interactant>
    <interactant intactId="EBI-10183064">
        <id>Q8N5A5-2</id>
        <label>ZGPAT</label>
    </interactant>
    <organismsDiffer>false</organismsDiffer>
    <experiments>12</experiments>
</comment>
<comment type="interaction">
    <interactant intactId="EBI-745226">
        <id>Q13155</id>
    </interactant>
    <interactant intactId="EBI-6179719">
        <id>PRO_0000038593</id>
        <label>gag</label>
        <dbReference type="UniProtKB" id="P04591"/>
    </interactant>
    <organismsDiffer>true</organismsDiffer>
    <experiments>3</experiments>
</comment>
<comment type="subcellular location">
    <subcellularLocation>
        <location evidence="10">Cytoplasm</location>
        <location evidence="10">Cytosol</location>
    </subcellularLocation>
    <subcellularLocation>
        <location evidence="2">Nucleus</location>
    </subcellularLocation>
    <text evidence="2">Following DNA damage, dissociates from the aminoacyl-tRNA synthase complex and translocates from the cytoplasm to the nucleus.</text>
</comment>
<comment type="alternative products">
    <event type="alternative splicing"/>
    <isoform>
        <id>Q13155-1</id>
        <name>1</name>
        <sequence type="displayed"/>
    </isoform>
    <isoform>
        <id>Q13155-2</id>
        <name>2</name>
        <name evidence="17">DX2</name>
        <sequence type="described" ref="VSP_059914"/>
    </isoform>
</comment>
<comment type="PTM">
    <text evidence="1">Phosphorylated on serine residues in response to UV irradiation.</text>
</comment>
<comment type="PTM">
    <text evidence="6">Ubiquitinated by PRKN, leading to its degradation by the proteasome. Mutant PRKN fails to ubiquitinate AIMP2 efficiently, allowing its accumulation which may contribute to neurodegeneration associated with Parkinson disease.</text>
</comment>
<comment type="disease" evidence="15">
    <disease id="DI-05268">
        <name>Leukodystrophy, hypomyelinating, 17</name>
        <acronym>HLD17</acronym>
        <description>An autosomal recessive neurodevelopmental disorder characterized by atrophy of cerebral cortex, spinal cord and cerebellum, thin corpus callosum, abnormal signals in the basal ganglia, and features suggesting hypo- or demyelination observed on brain imaging. Clinical manifestations include lack of development, absent speech, microcephaly, spasticity, seizures, and contractures.</description>
        <dbReference type="MIM" id="618006"/>
    </disease>
    <text>The disease may be caused by variants affecting the gene represented in this entry.</text>
</comment>
<comment type="miscellaneous">
    <text>Accumulates in brains affected by autosomal-recessive juvenile parkinsonism, idiopathic Parkinson disease and diffuse Lewy body disease.</text>
</comment>
<comment type="sequence caution" evidence="18">
    <conflict type="frameshift">
        <sequence resource="EMBL-CDS" id="AAC50391"/>
    </conflict>
</comment>